<feature type="chain" id="PRO_0000307384" description="Transcription factor BTF3 homolog 4">
    <location>
        <begin position="1"/>
        <end position="158"/>
    </location>
</feature>
<feature type="domain" description="NAC-A/B" evidence="1">
    <location>
        <begin position="33"/>
        <end position="98"/>
    </location>
</feature>
<feature type="region of interest" description="Disordered" evidence="2">
    <location>
        <begin position="123"/>
        <end position="158"/>
    </location>
</feature>
<feature type="compositionally biased region" description="Acidic residues" evidence="2">
    <location>
        <begin position="134"/>
        <end position="143"/>
    </location>
</feature>
<evidence type="ECO:0000255" key="1">
    <source>
        <dbReference type="PROSITE-ProRule" id="PRU00507"/>
    </source>
</evidence>
<evidence type="ECO:0000256" key="2">
    <source>
        <dbReference type="SAM" id="MobiDB-lite"/>
    </source>
</evidence>
<evidence type="ECO:0000305" key="3"/>
<keyword id="KW-1185">Reference proteome</keyword>
<sequence length="158" mass="17276">MNQEKLAKLQAQVRIGGKGTARRKKKVVHRTATADDKKLQSSLKKLAVNNIAGIEEVNMIKDDGTVIHFNNPKVQASLSANTFAITGHAEVKQITEMLPGILSQLGADSLTSLRKLAEQFPRQVLDSKASKPEDIEEEDDDVPELVGNFDEASKNEAN</sequence>
<protein>
    <recommendedName>
        <fullName>Transcription factor BTF3 homolog 4</fullName>
    </recommendedName>
    <alternativeName>
        <fullName>Basic transcription factor 3-like 4</fullName>
    </alternativeName>
</protein>
<gene>
    <name type="primary">btf3l4</name>
</gene>
<name>BT3L4_XENLA</name>
<dbReference type="EMBL" id="BC099245">
    <property type="protein sequence ID" value="AAH99245.1"/>
    <property type="molecule type" value="mRNA"/>
</dbReference>
<dbReference type="RefSeq" id="NP_001089608.1">
    <property type="nucleotide sequence ID" value="NM_001096139.1"/>
</dbReference>
<dbReference type="SMR" id="Q4KLF5"/>
<dbReference type="DNASU" id="734665"/>
<dbReference type="GeneID" id="734665"/>
<dbReference type="KEGG" id="xla:108715599"/>
<dbReference type="KEGG" id="xla:734665"/>
<dbReference type="AGR" id="Xenbase:XB-GENE-948242"/>
<dbReference type="CTD" id="108715599"/>
<dbReference type="CTD" id="734665"/>
<dbReference type="Xenbase" id="XB-GENE-948242">
    <property type="gene designation" value="btf3l4.L"/>
</dbReference>
<dbReference type="OMA" id="TPVAHEM"/>
<dbReference type="OrthoDB" id="8033832at2759"/>
<dbReference type="Proteomes" id="UP000186698">
    <property type="component" value="Chromosome 4L"/>
</dbReference>
<dbReference type="Proteomes" id="UP000186698">
    <property type="component" value="Chromosome 4S"/>
</dbReference>
<dbReference type="Bgee" id="108715599">
    <property type="expression patterns" value="Expressed in neurula embryo and 19 other cell types or tissues"/>
</dbReference>
<dbReference type="CDD" id="cd22055">
    <property type="entry name" value="NAC_BTF3"/>
    <property type="match status" value="1"/>
</dbReference>
<dbReference type="FunFam" id="2.20.70.30:FF:000001">
    <property type="entry name" value="Transcription factor BTF3 homolog"/>
    <property type="match status" value="1"/>
</dbReference>
<dbReference type="Gene3D" id="2.20.70.30">
    <property type="entry name" value="Nascent polypeptide-associated complex domain"/>
    <property type="match status" value="1"/>
</dbReference>
<dbReference type="InterPro" id="IPR039370">
    <property type="entry name" value="BTF3"/>
</dbReference>
<dbReference type="InterPro" id="IPR038187">
    <property type="entry name" value="NAC_A/B_dom_sf"/>
</dbReference>
<dbReference type="InterPro" id="IPR002715">
    <property type="entry name" value="Nas_poly-pep-assoc_cplx_dom"/>
</dbReference>
<dbReference type="PANTHER" id="PTHR10351">
    <property type="entry name" value="TRANSCRIPTION FACTOR BTF3 FAMILY MEMBER"/>
    <property type="match status" value="1"/>
</dbReference>
<dbReference type="Pfam" id="PF01849">
    <property type="entry name" value="NAC"/>
    <property type="match status" value="1"/>
</dbReference>
<dbReference type="SMART" id="SM01407">
    <property type="entry name" value="NAC"/>
    <property type="match status" value="1"/>
</dbReference>
<dbReference type="PROSITE" id="PS51151">
    <property type="entry name" value="NAC_AB"/>
    <property type="match status" value="1"/>
</dbReference>
<organism>
    <name type="scientific">Xenopus laevis</name>
    <name type="common">African clawed frog</name>
    <dbReference type="NCBI Taxonomy" id="8355"/>
    <lineage>
        <taxon>Eukaryota</taxon>
        <taxon>Metazoa</taxon>
        <taxon>Chordata</taxon>
        <taxon>Craniata</taxon>
        <taxon>Vertebrata</taxon>
        <taxon>Euteleostomi</taxon>
        <taxon>Amphibia</taxon>
        <taxon>Batrachia</taxon>
        <taxon>Anura</taxon>
        <taxon>Pipoidea</taxon>
        <taxon>Pipidae</taxon>
        <taxon>Xenopodinae</taxon>
        <taxon>Xenopus</taxon>
        <taxon>Xenopus</taxon>
    </lineage>
</organism>
<proteinExistence type="evidence at transcript level"/>
<reference key="1">
    <citation type="submission" date="2005-07" db="EMBL/GenBank/DDBJ databases">
        <authorList>
            <consortium name="NIH - Xenopus Gene Collection (XGC) project"/>
        </authorList>
    </citation>
    <scope>NUCLEOTIDE SEQUENCE [LARGE SCALE MRNA]</scope>
    <source>
        <tissue>Tadpole</tissue>
    </source>
</reference>
<comment type="similarity">
    <text evidence="3">Belongs to the NAC-beta family.</text>
</comment>
<accession>Q4KLF5</accession>